<evidence type="ECO:0000255" key="1">
    <source>
        <dbReference type="HAMAP-Rule" id="MF_00379"/>
    </source>
</evidence>
<comment type="function">
    <text evidence="1">Exhibits a very high intrinsic GTPase hydrolysis rate. Involved in the addition of a carboxymethylaminomethyl (cmnm) group at the wobble position (U34) of certain tRNAs, forming tRNA-cmnm(5)s(2)U34.</text>
</comment>
<comment type="cofactor">
    <cofactor evidence="1">
        <name>K(+)</name>
        <dbReference type="ChEBI" id="CHEBI:29103"/>
    </cofactor>
    <text evidence="1">Binds 1 potassium ion per subunit.</text>
</comment>
<comment type="subunit">
    <text evidence="1">Homodimer. Heterotetramer of two MnmE and two MnmG subunits.</text>
</comment>
<comment type="subcellular location">
    <subcellularLocation>
        <location evidence="1">Cytoplasm</location>
    </subcellularLocation>
</comment>
<comment type="similarity">
    <text evidence="1">Belongs to the TRAFAC class TrmE-Era-EngA-EngB-Septin-like GTPase superfamily. TrmE GTPase family.</text>
</comment>
<keyword id="KW-0963">Cytoplasm</keyword>
<keyword id="KW-0342">GTP-binding</keyword>
<keyword id="KW-0378">Hydrolase</keyword>
<keyword id="KW-0460">Magnesium</keyword>
<keyword id="KW-0479">Metal-binding</keyword>
<keyword id="KW-0547">Nucleotide-binding</keyword>
<keyword id="KW-0630">Potassium</keyword>
<keyword id="KW-0819">tRNA processing</keyword>
<dbReference type="EC" id="3.6.-.-" evidence="1"/>
<dbReference type="EMBL" id="CP000436">
    <property type="protein sequence ID" value="ABI24410.1"/>
    <property type="molecule type" value="Genomic_DNA"/>
</dbReference>
<dbReference type="SMR" id="Q0I0Z2"/>
<dbReference type="KEGG" id="hso:HS_0132"/>
<dbReference type="eggNOG" id="COG0486">
    <property type="taxonomic scope" value="Bacteria"/>
</dbReference>
<dbReference type="HOGENOM" id="CLU_019624_4_1_6"/>
<dbReference type="GO" id="GO:0005829">
    <property type="term" value="C:cytosol"/>
    <property type="evidence" value="ECO:0007669"/>
    <property type="project" value="TreeGrafter"/>
</dbReference>
<dbReference type="GO" id="GO:0005525">
    <property type="term" value="F:GTP binding"/>
    <property type="evidence" value="ECO:0007669"/>
    <property type="project" value="UniProtKB-UniRule"/>
</dbReference>
<dbReference type="GO" id="GO:0003924">
    <property type="term" value="F:GTPase activity"/>
    <property type="evidence" value="ECO:0007669"/>
    <property type="project" value="UniProtKB-UniRule"/>
</dbReference>
<dbReference type="GO" id="GO:0046872">
    <property type="term" value="F:metal ion binding"/>
    <property type="evidence" value="ECO:0007669"/>
    <property type="project" value="UniProtKB-KW"/>
</dbReference>
<dbReference type="GO" id="GO:0030488">
    <property type="term" value="P:tRNA methylation"/>
    <property type="evidence" value="ECO:0007669"/>
    <property type="project" value="TreeGrafter"/>
</dbReference>
<dbReference type="GO" id="GO:0002098">
    <property type="term" value="P:tRNA wobble uridine modification"/>
    <property type="evidence" value="ECO:0007669"/>
    <property type="project" value="TreeGrafter"/>
</dbReference>
<dbReference type="CDD" id="cd04164">
    <property type="entry name" value="trmE"/>
    <property type="match status" value="1"/>
</dbReference>
<dbReference type="CDD" id="cd14858">
    <property type="entry name" value="TrmE_N"/>
    <property type="match status" value="1"/>
</dbReference>
<dbReference type="FunFam" id="3.30.1360.120:FF:000001">
    <property type="entry name" value="tRNA modification GTPase MnmE"/>
    <property type="match status" value="1"/>
</dbReference>
<dbReference type="FunFam" id="3.40.50.300:FF:000249">
    <property type="entry name" value="tRNA modification GTPase MnmE"/>
    <property type="match status" value="1"/>
</dbReference>
<dbReference type="Gene3D" id="3.40.50.300">
    <property type="entry name" value="P-loop containing nucleotide triphosphate hydrolases"/>
    <property type="match status" value="1"/>
</dbReference>
<dbReference type="Gene3D" id="3.30.1360.120">
    <property type="entry name" value="Probable tRNA modification gtpase trme, domain 1"/>
    <property type="match status" value="1"/>
</dbReference>
<dbReference type="Gene3D" id="1.20.120.430">
    <property type="entry name" value="tRNA modification GTPase MnmE domain 2"/>
    <property type="match status" value="1"/>
</dbReference>
<dbReference type="HAMAP" id="MF_00379">
    <property type="entry name" value="GTPase_MnmE"/>
    <property type="match status" value="1"/>
</dbReference>
<dbReference type="InterPro" id="IPR031168">
    <property type="entry name" value="G_TrmE"/>
</dbReference>
<dbReference type="InterPro" id="IPR006073">
    <property type="entry name" value="GTP-bd"/>
</dbReference>
<dbReference type="InterPro" id="IPR018948">
    <property type="entry name" value="GTP-bd_TrmE_N"/>
</dbReference>
<dbReference type="InterPro" id="IPR004520">
    <property type="entry name" value="GTPase_MnmE"/>
</dbReference>
<dbReference type="InterPro" id="IPR027368">
    <property type="entry name" value="MnmE_dom2"/>
</dbReference>
<dbReference type="InterPro" id="IPR025867">
    <property type="entry name" value="MnmE_helical"/>
</dbReference>
<dbReference type="InterPro" id="IPR027417">
    <property type="entry name" value="P-loop_NTPase"/>
</dbReference>
<dbReference type="InterPro" id="IPR005225">
    <property type="entry name" value="Small_GTP-bd"/>
</dbReference>
<dbReference type="InterPro" id="IPR027266">
    <property type="entry name" value="TrmE/GcvT_dom1"/>
</dbReference>
<dbReference type="NCBIfam" id="TIGR00450">
    <property type="entry name" value="mnmE_trmE_thdF"/>
    <property type="match status" value="1"/>
</dbReference>
<dbReference type="NCBIfam" id="NF003661">
    <property type="entry name" value="PRK05291.1-3"/>
    <property type="match status" value="1"/>
</dbReference>
<dbReference type="NCBIfam" id="TIGR00231">
    <property type="entry name" value="small_GTP"/>
    <property type="match status" value="1"/>
</dbReference>
<dbReference type="PANTHER" id="PTHR42714">
    <property type="entry name" value="TRNA MODIFICATION GTPASE GTPBP3"/>
    <property type="match status" value="1"/>
</dbReference>
<dbReference type="PANTHER" id="PTHR42714:SF2">
    <property type="entry name" value="TRNA MODIFICATION GTPASE GTPBP3, MITOCHONDRIAL"/>
    <property type="match status" value="1"/>
</dbReference>
<dbReference type="Pfam" id="PF01926">
    <property type="entry name" value="MMR_HSR1"/>
    <property type="match status" value="1"/>
</dbReference>
<dbReference type="Pfam" id="PF12631">
    <property type="entry name" value="MnmE_helical"/>
    <property type="match status" value="1"/>
</dbReference>
<dbReference type="Pfam" id="PF10396">
    <property type="entry name" value="TrmE_N"/>
    <property type="match status" value="1"/>
</dbReference>
<dbReference type="SUPFAM" id="SSF52540">
    <property type="entry name" value="P-loop containing nucleoside triphosphate hydrolases"/>
    <property type="match status" value="1"/>
</dbReference>
<dbReference type="SUPFAM" id="SSF116878">
    <property type="entry name" value="TrmE connector domain"/>
    <property type="match status" value="1"/>
</dbReference>
<dbReference type="PROSITE" id="PS51709">
    <property type="entry name" value="G_TRME"/>
    <property type="match status" value="1"/>
</dbReference>
<protein>
    <recommendedName>
        <fullName evidence="1">tRNA modification GTPase MnmE</fullName>
        <ecNumber evidence="1">3.6.-.-</ecNumber>
    </recommendedName>
</protein>
<reference key="1">
    <citation type="journal article" date="2007" name="J. Bacteriol.">
        <title>Complete genome sequence of Haemophilus somnus (Histophilus somni) strain 129Pt and comparison to Haemophilus ducreyi 35000HP and Haemophilus influenzae Rd.</title>
        <authorList>
            <person name="Challacombe J.F."/>
            <person name="Duncan A.J."/>
            <person name="Brettin T.S."/>
            <person name="Bruce D."/>
            <person name="Chertkov O."/>
            <person name="Detter J.C."/>
            <person name="Han C.S."/>
            <person name="Misra M."/>
            <person name="Richardson P."/>
            <person name="Tapia R."/>
            <person name="Thayer N."/>
            <person name="Xie G."/>
            <person name="Inzana T.J."/>
        </authorList>
    </citation>
    <scope>NUCLEOTIDE SEQUENCE [LARGE SCALE GENOMIC DNA]</scope>
    <source>
        <strain>129Pt</strain>
    </source>
</reference>
<gene>
    <name evidence="1" type="primary">mnmE</name>
    <name evidence="1" type="synonym">trmE</name>
    <name type="ordered locus">HS_0132</name>
</gene>
<sequence length="452" mass="49475">MSRDTIVAQATPIGRGGVGILRVSGPLAQQVAEQVLGKTLTPRMANYLPFKDSDGTVLDQGIALYFKAPNSFTGEDVLELQGHGGQIVMDLLLKRILQIDGIRLARPGEFSEQAFLNDKLDLAQAEAIADLIEASSEQAARSALKSLQGEFSNKINELVDSVIYLRTYVEAAIDFPDEEIDFLADGKIETHLREIIAKLAKVKNEAKQGAILREGMKVVIAGRPNAGKSSLLNTLAGREAAIVTDIAGTTRDVLREHIHIDGMPLHIIDTAGLRDATDEVEKIGIRRAWDEIEQADRILLILDSTENQVELDLVQSEFMAKLPPHIPLTIVRNKADLSGEAEVLDEQNGLAVISLSAKTQKGVDLLRQHLKQSMGYQVCTEGGFLARRRHLEALEQADIHLQAGLIQLTEFYAGELVAEELRIAQHHLSEITGQFTSDDLLGNIFSSFCIGK</sequence>
<accession>Q0I0Z2</accession>
<name>MNME_HISS1</name>
<organism>
    <name type="scientific">Histophilus somni (strain 129Pt)</name>
    <name type="common">Haemophilus somnus</name>
    <dbReference type="NCBI Taxonomy" id="205914"/>
    <lineage>
        <taxon>Bacteria</taxon>
        <taxon>Pseudomonadati</taxon>
        <taxon>Pseudomonadota</taxon>
        <taxon>Gammaproteobacteria</taxon>
        <taxon>Pasteurellales</taxon>
        <taxon>Pasteurellaceae</taxon>
        <taxon>Histophilus</taxon>
    </lineage>
</organism>
<feature type="chain" id="PRO_0000345795" description="tRNA modification GTPase MnmE">
    <location>
        <begin position="1"/>
        <end position="452"/>
    </location>
</feature>
<feature type="domain" description="TrmE-type G">
    <location>
        <begin position="215"/>
        <end position="375"/>
    </location>
</feature>
<feature type="binding site" evidence="1">
    <location>
        <position position="22"/>
    </location>
    <ligand>
        <name>(6S)-5-formyl-5,6,7,8-tetrahydrofolate</name>
        <dbReference type="ChEBI" id="CHEBI:57457"/>
    </ligand>
</feature>
<feature type="binding site" evidence="1">
    <location>
        <position position="79"/>
    </location>
    <ligand>
        <name>(6S)-5-formyl-5,6,7,8-tetrahydrofolate</name>
        <dbReference type="ChEBI" id="CHEBI:57457"/>
    </ligand>
</feature>
<feature type="binding site" evidence="1">
    <location>
        <position position="119"/>
    </location>
    <ligand>
        <name>(6S)-5-formyl-5,6,7,8-tetrahydrofolate</name>
        <dbReference type="ChEBI" id="CHEBI:57457"/>
    </ligand>
</feature>
<feature type="binding site" evidence="1">
    <location>
        <begin position="225"/>
        <end position="230"/>
    </location>
    <ligand>
        <name>GTP</name>
        <dbReference type="ChEBI" id="CHEBI:37565"/>
    </ligand>
</feature>
<feature type="binding site" evidence="1">
    <location>
        <position position="225"/>
    </location>
    <ligand>
        <name>K(+)</name>
        <dbReference type="ChEBI" id="CHEBI:29103"/>
    </ligand>
</feature>
<feature type="binding site" evidence="1">
    <location>
        <position position="229"/>
    </location>
    <ligand>
        <name>Mg(2+)</name>
        <dbReference type="ChEBI" id="CHEBI:18420"/>
    </ligand>
</feature>
<feature type="binding site" evidence="1">
    <location>
        <begin position="244"/>
        <end position="250"/>
    </location>
    <ligand>
        <name>GTP</name>
        <dbReference type="ChEBI" id="CHEBI:37565"/>
    </ligand>
</feature>
<feature type="binding site" evidence="1">
    <location>
        <position position="244"/>
    </location>
    <ligand>
        <name>K(+)</name>
        <dbReference type="ChEBI" id="CHEBI:29103"/>
    </ligand>
</feature>
<feature type="binding site" evidence="1">
    <location>
        <position position="246"/>
    </location>
    <ligand>
        <name>K(+)</name>
        <dbReference type="ChEBI" id="CHEBI:29103"/>
    </ligand>
</feature>
<feature type="binding site" evidence="1">
    <location>
        <position position="249"/>
    </location>
    <ligand>
        <name>K(+)</name>
        <dbReference type="ChEBI" id="CHEBI:29103"/>
    </ligand>
</feature>
<feature type="binding site" evidence="1">
    <location>
        <position position="250"/>
    </location>
    <ligand>
        <name>Mg(2+)</name>
        <dbReference type="ChEBI" id="CHEBI:18420"/>
    </ligand>
</feature>
<feature type="binding site" evidence="1">
    <location>
        <begin position="269"/>
        <end position="272"/>
    </location>
    <ligand>
        <name>GTP</name>
        <dbReference type="ChEBI" id="CHEBI:37565"/>
    </ligand>
</feature>
<feature type="binding site" evidence="1">
    <location>
        <begin position="333"/>
        <end position="336"/>
    </location>
    <ligand>
        <name>GTP</name>
        <dbReference type="ChEBI" id="CHEBI:37565"/>
    </ligand>
</feature>
<feature type="binding site" evidence="1">
    <location>
        <position position="452"/>
    </location>
    <ligand>
        <name>(6S)-5-formyl-5,6,7,8-tetrahydrofolate</name>
        <dbReference type="ChEBI" id="CHEBI:57457"/>
    </ligand>
</feature>
<proteinExistence type="inferred from homology"/>